<dbReference type="EC" id="1.1.1.236"/>
<dbReference type="EMBL" id="L20485">
    <property type="protein sequence ID" value="AAB09776.1"/>
    <property type="molecule type" value="mRNA"/>
</dbReference>
<dbReference type="EMBL" id="AB026545">
    <property type="protein sequence ID" value="BAA85845.1"/>
    <property type="molecule type" value="Genomic_DNA"/>
</dbReference>
<dbReference type="SMR" id="P50164"/>
<dbReference type="UniPathway" id="UPA00330"/>
<dbReference type="GO" id="GO:0050358">
    <property type="term" value="F:tropinone reductase activity"/>
    <property type="evidence" value="ECO:0007669"/>
    <property type="project" value="UniProtKB-EC"/>
</dbReference>
<dbReference type="GO" id="GO:0009710">
    <property type="term" value="P:tropane alkaloid biosynthetic process"/>
    <property type="evidence" value="ECO:0007669"/>
    <property type="project" value="UniProtKB-UniPathway"/>
</dbReference>
<dbReference type="CDD" id="cd05329">
    <property type="entry name" value="TR_SDR_c"/>
    <property type="match status" value="1"/>
</dbReference>
<dbReference type="FunFam" id="3.40.50.720:FF:000084">
    <property type="entry name" value="Short-chain dehydrogenase reductase"/>
    <property type="match status" value="1"/>
</dbReference>
<dbReference type="Gene3D" id="3.40.50.720">
    <property type="entry name" value="NAD(P)-binding Rossmann-like Domain"/>
    <property type="match status" value="1"/>
</dbReference>
<dbReference type="InterPro" id="IPR036291">
    <property type="entry name" value="NAD(P)-bd_dom_sf"/>
</dbReference>
<dbReference type="InterPro" id="IPR020904">
    <property type="entry name" value="Sc_DH/Rdtase_CS"/>
</dbReference>
<dbReference type="InterPro" id="IPR002347">
    <property type="entry name" value="SDR_fam"/>
</dbReference>
<dbReference type="InterPro" id="IPR045000">
    <property type="entry name" value="TR"/>
</dbReference>
<dbReference type="PANTHER" id="PTHR42898">
    <property type="entry name" value="TROPINONE REDUCTASE"/>
    <property type="match status" value="1"/>
</dbReference>
<dbReference type="PANTHER" id="PTHR42898:SF55">
    <property type="entry name" value="TROPINONE REDUCTASE II"/>
    <property type="match status" value="1"/>
</dbReference>
<dbReference type="Pfam" id="PF13561">
    <property type="entry name" value="adh_short_C2"/>
    <property type="match status" value="1"/>
</dbReference>
<dbReference type="PRINTS" id="PR00081">
    <property type="entry name" value="GDHRDH"/>
</dbReference>
<dbReference type="PRINTS" id="PR00080">
    <property type="entry name" value="SDRFAMILY"/>
</dbReference>
<dbReference type="SUPFAM" id="SSF51735">
    <property type="entry name" value="NAD(P)-binding Rossmann-fold domains"/>
    <property type="match status" value="1"/>
</dbReference>
<dbReference type="PROSITE" id="PS00061">
    <property type="entry name" value="ADH_SHORT"/>
    <property type="match status" value="1"/>
</dbReference>
<feature type="chain" id="PRO_0000054787" description="Tropinone reductase 2">
    <location>
        <begin position="1"/>
        <end position="260"/>
    </location>
</feature>
<feature type="active site" description="Proton acceptor" evidence="2">
    <location>
        <position position="159"/>
    </location>
</feature>
<feature type="binding site" evidence="1">
    <location>
        <begin position="13"/>
        <end position="37"/>
    </location>
    <ligand>
        <name>NADP(+)</name>
        <dbReference type="ChEBI" id="CHEBI:58349"/>
    </ligand>
</feature>
<feature type="binding site" evidence="1">
    <location>
        <position position="146"/>
    </location>
    <ligand>
        <name>substrate</name>
    </ligand>
</feature>
<reference key="1">
    <citation type="journal article" date="1993" name="Plant Physiol.">
        <title>cDNA encoding tropinone reductase-II from Hyoscyamus niger.</title>
        <authorList>
            <person name="Nakajima K."/>
            <person name="Hashimoto T."/>
            <person name="Yamada Y."/>
        </authorList>
    </citation>
    <scope>NUCLEOTIDE SEQUENCE [MRNA]</scope>
    <source>
        <tissue>Cultured root</tissue>
    </source>
</reference>
<reference key="2">
    <citation type="journal article" date="2002" name="Plant Mol. Biol.">
        <title>Molecular cloning, expression and characterization of tropinone reductase II, an enzyme of the SDR family in Solanum tuberosum (L.).</title>
        <authorList>
            <person name="Keiner R."/>
            <person name="Kaiser H."/>
            <person name="Nakajima K."/>
            <person name="Hashimoto T."/>
            <person name="Drager B."/>
        </authorList>
    </citation>
    <scope>NUCLEOTIDE SEQUENCE [GENOMIC DNA]</scope>
</reference>
<keyword id="KW-0521">NADP</keyword>
<keyword id="KW-0560">Oxidoreductase</keyword>
<accession>P50164</accession>
<protein>
    <recommendedName>
        <fullName>Tropinone reductase 2</fullName>
        <ecNumber>1.1.1.236</ecNumber>
    </recommendedName>
    <alternativeName>
        <fullName>Tropinone reductase II</fullName>
        <shortName>TR-II</shortName>
    </alternativeName>
</protein>
<gene>
    <name type="primary">TR2</name>
</gene>
<organism>
    <name type="scientific">Hyoscyamus niger</name>
    <name type="common">Black henbane</name>
    <dbReference type="NCBI Taxonomy" id="4079"/>
    <lineage>
        <taxon>Eukaryota</taxon>
        <taxon>Viridiplantae</taxon>
        <taxon>Streptophyta</taxon>
        <taxon>Embryophyta</taxon>
        <taxon>Tracheophyta</taxon>
        <taxon>Spermatophyta</taxon>
        <taxon>Magnoliopsida</taxon>
        <taxon>eudicotyledons</taxon>
        <taxon>Gunneridae</taxon>
        <taxon>Pentapetalae</taxon>
        <taxon>asterids</taxon>
        <taxon>lamiids</taxon>
        <taxon>Solanales</taxon>
        <taxon>Solanaceae</taxon>
        <taxon>Solanoideae</taxon>
        <taxon>Hyoscyameae</taxon>
        <taxon>Hyoscyamus</taxon>
    </lineage>
</organism>
<proteinExistence type="evidence at transcript level"/>
<sequence>MAGRWNLEGCTALVTGGSRGIGYGIVEELANLGASVYTCSRNQKELDECLTQWRSKGFNVEASVCDLSSRSEREEFMKTVSNHFHGKLNILVNNAGIVIYKEAKDYTMEDYSHIMSINFEAAYHLSVLAHPFLKASERGNVVFISSISGASALPYEAVYGATKGAMDQLTRCLAFEWAKDNIRVNGVGPGVIATSMVEMTIQDPEQKENLDKLIDRCALRRMGEPKELAAVVAFLCFPAASYVTGQIIYVDGGFMANGGF</sequence>
<name>TRN2_HYONI</name>
<evidence type="ECO:0000250" key="1"/>
<evidence type="ECO:0000255" key="2">
    <source>
        <dbReference type="PROSITE-ProRule" id="PRU10001"/>
    </source>
</evidence>
<evidence type="ECO:0000305" key="3"/>
<comment type="function">
    <text>Catalyzes the stereospecific reduction of tropinone to pseudotropine.</text>
</comment>
<comment type="catalytic activity">
    <reaction>
        <text>pseudotropine + NADP(+) = tropinone + NADPH + H(+)</text>
        <dbReference type="Rhea" id="RHEA:24244"/>
        <dbReference type="ChEBI" id="CHEBI:15378"/>
        <dbReference type="ChEBI" id="CHEBI:57493"/>
        <dbReference type="ChEBI" id="CHEBI:57783"/>
        <dbReference type="ChEBI" id="CHEBI:57851"/>
        <dbReference type="ChEBI" id="CHEBI:58349"/>
        <dbReference type="EC" id="1.1.1.236"/>
    </reaction>
</comment>
<comment type="pathway">
    <text>Alkaloid biosynthesis; tropane alkaloid biosynthesis.</text>
</comment>
<comment type="similarity">
    <text evidence="3">Belongs to the short-chain dehydrogenases/reductases (SDR) family.</text>
</comment>